<feature type="chain" id="PRO_0000426083" description="Repressor of filamentous growth 1">
    <location>
        <begin position="1"/>
        <end position="600"/>
    </location>
</feature>
<feature type="DNA-binding region" description="HMG box" evidence="1">
    <location>
        <begin position="212"/>
        <end position="281"/>
    </location>
</feature>
<feature type="region of interest" description="Disordered" evidence="2">
    <location>
        <begin position="1"/>
        <end position="59"/>
    </location>
</feature>
<feature type="region of interest" description="Disordered" evidence="2">
    <location>
        <begin position="112"/>
        <end position="160"/>
    </location>
</feature>
<feature type="region of interest" description="Disordered" evidence="2">
    <location>
        <begin position="180"/>
        <end position="200"/>
    </location>
</feature>
<feature type="region of interest" description="Disordered" evidence="2">
    <location>
        <begin position="266"/>
        <end position="337"/>
    </location>
</feature>
<feature type="region of interest" description="Disordered" evidence="2">
    <location>
        <begin position="427"/>
        <end position="549"/>
    </location>
</feature>
<feature type="region of interest" description="Disordered" evidence="2">
    <location>
        <begin position="564"/>
        <end position="600"/>
    </location>
</feature>
<feature type="compositionally biased region" description="Polar residues" evidence="2">
    <location>
        <begin position="1"/>
        <end position="14"/>
    </location>
</feature>
<feature type="compositionally biased region" description="Low complexity" evidence="2">
    <location>
        <begin position="20"/>
        <end position="39"/>
    </location>
</feature>
<feature type="compositionally biased region" description="Low complexity" evidence="2">
    <location>
        <begin position="47"/>
        <end position="59"/>
    </location>
</feature>
<feature type="compositionally biased region" description="Polar residues" evidence="2">
    <location>
        <begin position="131"/>
        <end position="160"/>
    </location>
</feature>
<feature type="compositionally biased region" description="Low complexity" evidence="2">
    <location>
        <begin position="188"/>
        <end position="200"/>
    </location>
</feature>
<feature type="compositionally biased region" description="Basic residues" evidence="2">
    <location>
        <begin position="272"/>
        <end position="289"/>
    </location>
</feature>
<feature type="compositionally biased region" description="Low complexity" evidence="2">
    <location>
        <begin position="297"/>
        <end position="312"/>
    </location>
</feature>
<feature type="compositionally biased region" description="Gly residues" evidence="2">
    <location>
        <begin position="313"/>
        <end position="322"/>
    </location>
</feature>
<feature type="compositionally biased region" description="Low complexity" evidence="2">
    <location>
        <begin position="427"/>
        <end position="470"/>
    </location>
</feature>
<feature type="compositionally biased region" description="Polar residues" evidence="2">
    <location>
        <begin position="481"/>
        <end position="496"/>
    </location>
</feature>
<feature type="compositionally biased region" description="Low complexity" evidence="2">
    <location>
        <begin position="497"/>
        <end position="506"/>
    </location>
</feature>
<feature type="compositionally biased region" description="Polar residues" evidence="2">
    <location>
        <begin position="507"/>
        <end position="547"/>
    </location>
</feature>
<feature type="compositionally biased region" description="Low complexity" evidence="2">
    <location>
        <begin position="564"/>
        <end position="574"/>
    </location>
</feature>
<feature type="compositionally biased region" description="Low complexity" evidence="2">
    <location>
        <begin position="581"/>
        <end position="600"/>
    </location>
</feature>
<reference key="1">
    <citation type="journal article" date="2004" name="Proc. Natl. Acad. Sci. U.S.A.">
        <title>The diploid genome sequence of Candida albicans.</title>
        <authorList>
            <person name="Jones T."/>
            <person name="Federspiel N.A."/>
            <person name="Chibana H."/>
            <person name="Dungan J."/>
            <person name="Kalman S."/>
            <person name="Magee B.B."/>
            <person name="Newport G."/>
            <person name="Thorstenson Y.R."/>
            <person name="Agabian N."/>
            <person name="Magee P.T."/>
            <person name="Davis R.W."/>
            <person name="Scherer S."/>
        </authorList>
    </citation>
    <scope>NUCLEOTIDE SEQUENCE [LARGE SCALE GENOMIC DNA]</scope>
    <source>
        <strain>SC5314 / ATCC MYA-2876</strain>
    </source>
</reference>
<reference key="2">
    <citation type="journal article" date="2007" name="Genome Biol.">
        <title>Assembly of the Candida albicans genome into sixteen supercontigs aligned on the eight chromosomes.</title>
        <authorList>
            <person name="van het Hoog M."/>
            <person name="Rast T.J."/>
            <person name="Martchenko M."/>
            <person name="Grindle S."/>
            <person name="Dignard D."/>
            <person name="Hogues H."/>
            <person name="Cuomo C."/>
            <person name="Berriman M."/>
            <person name="Scherer S."/>
            <person name="Magee B.B."/>
            <person name="Whiteway M."/>
            <person name="Chibana H."/>
            <person name="Nantel A."/>
            <person name="Magee P.T."/>
        </authorList>
    </citation>
    <scope>GENOME REANNOTATION</scope>
    <source>
        <strain>SC5314 / ATCC MYA-2876</strain>
    </source>
</reference>
<reference key="3">
    <citation type="journal article" date="2013" name="Genome Biol.">
        <title>Assembly of a phased diploid Candida albicans genome facilitates allele-specific measurements and provides a simple model for repeat and indel structure.</title>
        <authorList>
            <person name="Muzzey D."/>
            <person name="Schwartz K."/>
            <person name="Weissman J.S."/>
            <person name="Sherlock G."/>
        </authorList>
    </citation>
    <scope>NUCLEOTIDE SEQUENCE [LARGE SCALE GENOMIC DNA]</scope>
    <scope>GENOME REANNOTATION</scope>
    <source>
        <strain>SC5314 / ATCC MYA-2876</strain>
    </source>
</reference>
<reference key="4">
    <citation type="journal article" date="2001" name="Genetics">
        <title>The DNA binding protein Rfg1 is a repressor of filamentation in Candida albicans.</title>
        <authorList>
            <person name="Khalaf R.A."/>
            <person name="Zitomer R.S."/>
        </authorList>
    </citation>
    <scope>FUNCTION</scope>
    <scope>DISRUPTION PHENOTYPE</scope>
</reference>
<reference key="5">
    <citation type="journal article" date="2001" name="Mol. Cell. Biol.">
        <title>Rfg1, a protein related to the Saccharomyces cerevisiae hypoxic regulator Rox1, controls filamentous growth and virulence in Candida albicans.</title>
        <authorList>
            <person name="Kadosh D."/>
            <person name="Johnson A.D."/>
        </authorList>
    </citation>
    <scope>FUNCTION</scope>
    <scope>DISRUPTION PHENOTYPE</scope>
</reference>
<reference key="6">
    <citation type="journal article" date="2005" name="Mol. Biol. Cell">
        <title>Induction of the Candida albicans filamentous growth program by relief of transcriptional repression: a genome-wide analysis.</title>
        <authorList>
            <person name="Kadosh D."/>
            <person name="Johnson A.D."/>
        </authorList>
    </citation>
    <scope>FUNCTION</scope>
</reference>
<reference key="7">
    <citation type="journal article" date="2007" name="PLoS Biol.">
        <title>Interlocking transcriptional feedback loops control white-opaque switching in Candida albicans.</title>
        <authorList>
            <person name="Zordan R.E."/>
            <person name="Miller M.G."/>
            <person name="Galgoczy D.J."/>
            <person name="Tuch B.B."/>
            <person name="Johnson A.D."/>
        </authorList>
    </citation>
    <scope>INDUCTION</scope>
</reference>
<reference key="8">
    <citation type="journal article" date="2010" name="Eukaryot. Cell">
        <title>Pseudohyphal regulation by the transcription factor Rfg1p in Candida albicans.</title>
        <authorList>
            <person name="Cleary I.A."/>
            <person name="Mulabagal P."/>
            <person name="Reinhard S.M."/>
            <person name="Yadev N.P."/>
            <person name="Murdoch C."/>
            <person name="Thornhill M.H."/>
            <person name="Lazzell A.L."/>
            <person name="Monteagudo C."/>
            <person name="Thomas D.P."/>
            <person name="Saville S.P."/>
        </authorList>
    </citation>
    <scope>FUNCTION</scope>
</reference>
<organism>
    <name type="scientific">Candida albicans (strain SC5314 / ATCC MYA-2876)</name>
    <name type="common">Yeast</name>
    <dbReference type="NCBI Taxonomy" id="237561"/>
    <lineage>
        <taxon>Eukaryota</taxon>
        <taxon>Fungi</taxon>
        <taxon>Dikarya</taxon>
        <taxon>Ascomycota</taxon>
        <taxon>Saccharomycotina</taxon>
        <taxon>Pichiomycetes</taxon>
        <taxon>Debaryomycetaceae</taxon>
        <taxon>Candida/Lodderomyces clade</taxon>
        <taxon>Candida</taxon>
    </lineage>
</organism>
<name>RFG1_CANAL</name>
<comment type="function">
    <text evidence="3 4 5 7">Transcription regulator that functions in both the positive and negative regulation of filamentous growth, depending upon the environmental conditions. Recruits the TUP1/SSN6 general repression complex to achieve repression. Regulates genes encoding cell wall components that are specifically expressed in the filamentous forms such as HWP1, RBT1, HYR1, ECE1, ALS1, RBT4 and RBT5.</text>
</comment>
<comment type="subcellular location">
    <subcellularLocation>
        <location evidence="1">Nucleus</location>
    </subcellularLocation>
</comment>
<comment type="induction">
    <text evidence="6">Expression is regulated by WOR1.</text>
</comment>
<comment type="disruption phenotype">
    <text evidence="3 4">Leads to constitutive hyphal growth and avirulence in a mouse model.</text>
</comment>
<protein>
    <recommendedName>
        <fullName>Repressor of filamentous growth 1</fullName>
    </recommendedName>
</protein>
<dbReference type="EMBL" id="CP017630">
    <property type="protein sequence ID" value="AOW31008.1"/>
    <property type="molecule type" value="Genomic_DNA"/>
</dbReference>
<dbReference type="RefSeq" id="XP_715755.2">
    <property type="nucleotide sequence ID" value="XM_710662.2"/>
</dbReference>
<dbReference type="SMR" id="Q5A220"/>
<dbReference type="STRING" id="237561.Q5A220"/>
<dbReference type="EnsemblFungi" id="CR_02640W_A-T">
    <property type="protein sequence ID" value="CR_02640W_A-T-p1"/>
    <property type="gene ID" value="CR_02640W_A"/>
</dbReference>
<dbReference type="GeneID" id="3642570"/>
<dbReference type="KEGG" id="cal:CAALFM_CR02640WA"/>
<dbReference type="CGD" id="CAL0000179598">
    <property type="gene designation" value="RFG1"/>
</dbReference>
<dbReference type="VEuPathDB" id="FungiDB:CR_02640W_A"/>
<dbReference type="eggNOG" id="KOG0527">
    <property type="taxonomic scope" value="Eukaryota"/>
</dbReference>
<dbReference type="HOGENOM" id="CLU_032221_0_0_1"/>
<dbReference type="InParanoid" id="Q5A220"/>
<dbReference type="OrthoDB" id="6247875at2759"/>
<dbReference type="Proteomes" id="UP000000559">
    <property type="component" value="Chromosome R"/>
</dbReference>
<dbReference type="GO" id="GO:0005634">
    <property type="term" value="C:nucleus"/>
    <property type="evidence" value="ECO:0000318"/>
    <property type="project" value="GO_Central"/>
</dbReference>
<dbReference type="GO" id="GO:0001216">
    <property type="term" value="F:DNA-binding transcription activator activity"/>
    <property type="evidence" value="ECO:0000314"/>
    <property type="project" value="CGD"/>
</dbReference>
<dbReference type="GO" id="GO:0001228">
    <property type="term" value="F:DNA-binding transcription activator activity, RNA polymerase II-specific"/>
    <property type="evidence" value="ECO:0000318"/>
    <property type="project" value="GO_Central"/>
</dbReference>
<dbReference type="GO" id="GO:0003700">
    <property type="term" value="F:DNA-binding transcription factor activity"/>
    <property type="evidence" value="ECO:0000316"/>
    <property type="project" value="CGD"/>
</dbReference>
<dbReference type="GO" id="GO:0003690">
    <property type="term" value="F:double-stranded DNA binding"/>
    <property type="evidence" value="ECO:0000314"/>
    <property type="project" value="CGD"/>
</dbReference>
<dbReference type="GO" id="GO:0000978">
    <property type="term" value="F:RNA polymerase II cis-regulatory region sequence-specific DNA binding"/>
    <property type="evidence" value="ECO:0000318"/>
    <property type="project" value="GO_Central"/>
</dbReference>
<dbReference type="GO" id="GO:0030154">
    <property type="term" value="P:cell differentiation"/>
    <property type="evidence" value="ECO:0000318"/>
    <property type="project" value="GO_Central"/>
</dbReference>
<dbReference type="GO" id="GO:0009267">
    <property type="term" value="P:cellular response to starvation"/>
    <property type="evidence" value="ECO:0000315"/>
    <property type="project" value="CGD"/>
</dbReference>
<dbReference type="GO" id="GO:0030447">
    <property type="term" value="P:filamentous growth"/>
    <property type="evidence" value="ECO:0000315"/>
    <property type="project" value="CGD"/>
</dbReference>
<dbReference type="GO" id="GO:0044182">
    <property type="term" value="P:filamentous growth of a population of unicellular organisms"/>
    <property type="evidence" value="ECO:0000315"/>
    <property type="project" value="CGD"/>
</dbReference>
<dbReference type="GO" id="GO:0036180">
    <property type="term" value="P:filamentous growth of a population of unicellular organisms in response to biotic stimulus"/>
    <property type="evidence" value="ECO:0000315"/>
    <property type="project" value="CGD"/>
</dbReference>
<dbReference type="GO" id="GO:0036170">
    <property type="term" value="P:filamentous growth of a population of unicellular organisms in response to starvation"/>
    <property type="evidence" value="ECO:0000315"/>
    <property type="project" value="CGD"/>
</dbReference>
<dbReference type="GO" id="GO:0045892">
    <property type="term" value="P:negative regulation of DNA-templated transcription"/>
    <property type="evidence" value="ECO:0000315"/>
    <property type="project" value="CGD"/>
</dbReference>
<dbReference type="GO" id="GO:1900429">
    <property type="term" value="P:negative regulation of filamentous growth of a population of unicellular organisms"/>
    <property type="evidence" value="ECO:0000315"/>
    <property type="project" value="CGD"/>
</dbReference>
<dbReference type="GO" id="GO:1900742">
    <property type="term" value="P:negative regulation of filamentous growth of a population of unicellular organisms in response to pH"/>
    <property type="evidence" value="ECO:0000315"/>
    <property type="project" value="CGD"/>
</dbReference>
<dbReference type="GO" id="GO:0000122">
    <property type="term" value="P:negative regulation of transcription by RNA polymerase II"/>
    <property type="evidence" value="ECO:0000315"/>
    <property type="project" value="CGD"/>
</dbReference>
<dbReference type="GO" id="GO:0045944">
    <property type="term" value="P:positive regulation of transcription by RNA polymerase II"/>
    <property type="evidence" value="ECO:0000318"/>
    <property type="project" value="GO_Central"/>
</dbReference>
<dbReference type="GO" id="GO:0006357">
    <property type="term" value="P:regulation of transcription by RNA polymerase II"/>
    <property type="evidence" value="ECO:0000315"/>
    <property type="project" value="CGD"/>
</dbReference>
<dbReference type="CDD" id="cd01389">
    <property type="entry name" value="HMG-box_ROX1-like"/>
    <property type="match status" value="1"/>
</dbReference>
<dbReference type="FunFam" id="1.10.30.10:FF:000041">
    <property type="entry name" value="HMG box family protein"/>
    <property type="match status" value="1"/>
</dbReference>
<dbReference type="Gene3D" id="1.10.30.10">
    <property type="entry name" value="High mobility group box domain"/>
    <property type="match status" value="1"/>
</dbReference>
<dbReference type="InterPro" id="IPR009071">
    <property type="entry name" value="HMG_box_dom"/>
</dbReference>
<dbReference type="InterPro" id="IPR036910">
    <property type="entry name" value="HMG_box_dom_sf"/>
</dbReference>
<dbReference type="InterPro" id="IPR050140">
    <property type="entry name" value="SRY-related_HMG-box_TF-like"/>
</dbReference>
<dbReference type="PANTHER" id="PTHR10270:SF161">
    <property type="entry name" value="SEX-DETERMINING REGION Y PROTEIN"/>
    <property type="match status" value="1"/>
</dbReference>
<dbReference type="PANTHER" id="PTHR10270">
    <property type="entry name" value="SOX TRANSCRIPTION FACTOR"/>
    <property type="match status" value="1"/>
</dbReference>
<dbReference type="Pfam" id="PF00505">
    <property type="entry name" value="HMG_box"/>
    <property type="match status" value="1"/>
</dbReference>
<dbReference type="SMART" id="SM00398">
    <property type="entry name" value="HMG"/>
    <property type="match status" value="1"/>
</dbReference>
<dbReference type="SUPFAM" id="SSF47095">
    <property type="entry name" value="HMG-box"/>
    <property type="match status" value="1"/>
</dbReference>
<dbReference type="PROSITE" id="PS50118">
    <property type="entry name" value="HMG_BOX_2"/>
    <property type="match status" value="1"/>
</dbReference>
<accession>Q5A220</accession>
<accession>A0A1D8PSA0</accession>
<accession>Q5A271</accession>
<evidence type="ECO:0000255" key="1">
    <source>
        <dbReference type="PROSITE-ProRule" id="PRU00267"/>
    </source>
</evidence>
<evidence type="ECO:0000256" key="2">
    <source>
        <dbReference type="SAM" id="MobiDB-lite"/>
    </source>
</evidence>
<evidence type="ECO:0000269" key="3">
    <source>
    </source>
</evidence>
<evidence type="ECO:0000269" key="4">
    <source>
    </source>
</evidence>
<evidence type="ECO:0000269" key="5">
    <source>
    </source>
</evidence>
<evidence type="ECO:0000269" key="6">
    <source>
    </source>
</evidence>
<evidence type="ECO:0000269" key="7">
    <source>
    </source>
</evidence>
<sequence>MSTAIYYSTHNNMHTNDDITNGSGSTTSGNPGANPSNPNHTNAGATINNNSNIGLNSANKNHTTLLPSLAHIMPSNSNNTTNSGSSIDISSTLINPYSSGAAAAAAAVGGGNGGYYHPPPPHSQQQQQQQFDTSYSNQTTPTSAYTNFNNDSTHSPTDISMQQNMNNLASSSGNMSIGGGIDGNFSHNNNNNNNNNNNNNNKCICKSKVNKIPRPRNAFILFRQKYHQMVLDEGTVIRTNPEVSRELGRRWRGLSPQEKEHWNNLAEEEKKNHAKKYPGYRYTPRRNGRNKNCPVCKNKPLPNNKSNSISGMSGSGGGGGSISGASSLSGGLTSRDNSITNANAIDYQQQQLQQQQQQQQQQAIQFQSLPPDQYQQLIKQQQQQLQLQAQLNGGGGGGGITSNPQTIPQYITNGNYPSYIISPNPYSTTSTTAPTTTTTTTTNASSIGLSVPPTATTTSTSSQPTSANSQLHFYEAEKLSPVSSTHHQSSISEIAAQQQQQQQQQQFMYNTNYSTIPPNNTTTMQQHSAGTGNDYSLNGNNSGNTGYDNRYGYGQPMIITGQSQQGLQVQQQGQHYNSGLHAAQHYQQQQQQHHQQQPPQ</sequence>
<proteinExistence type="evidence at transcript level"/>
<keyword id="KW-0238">DNA-binding</keyword>
<keyword id="KW-0539">Nucleus</keyword>
<keyword id="KW-1185">Reference proteome</keyword>
<keyword id="KW-0678">Repressor</keyword>
<keyword id="KW-0804">Transcription</keyword>
<keyword id="KW-0805">Transcription regulation</keyword>
<keyword id="KW-0843">Virulence</keyword>
<gene>
    <name type="primary">RFG1</name>
    <name type="synonym">ROX1</name>
    <name type="ordered locus">CAALFM_CR02640WA</name>
    <name type="ORF">CaO19.10341</name>
    <name type="ORF">CaO19.2823</name>
</gene>